<keyword id="KW-0068">Autocatalytic cleavage</keyword>
<keyword id="KW-0963">Cytoplasm</keyword>
<keyword id="KW-0210">Decarboxylase</keyword>
<keyword id="KW-0456">Lyase</keyword>
<keyword id="KW-0566">Pantothenate biosynthesis</keyword>
<keyword id="KW-0670">Pyruvate</keyword>
<keyword id="KW-0704">Schiff base</keyword>
<keyword id="KW-0865">Zymogen</keyword>
<sequence length="111" mass="12241">MLISVLKSKISYATVTGKDLFYVGSITIDSEIMKQANIIENEKVQVVNLNNGARLETYVIKGEPNSKTIALNGPAARRCEIGDQLFIISYAQVDPTRENIKPKLVDLKTGD</sequence>
<protein>
    <recommendedName>
        <fullName evidence="1">Aspartate 1-decarboxylase</fullName>
        <ecNumber evidence="1">4.1.1.11</ecNumber>
    </recommendedName>
    <alternativeName>
        <fullName evidence="1">Aspartate alpha-decarboxylase</fullName>
    </alternativeName>
    <component>
        <recommendedName>
            <fullName evidence="1">Aspartate 1-decarboxylase beta chain</fullName>
        </recommendedName>
    </component>
    <component>
        <recommendedName>
            <fullName evidence="1">Aspartate 1-decarboxylase alpha chain</fullName>
        </recommendedName>
    </component>
</protein>
<accession>A0Q7L4</accession>
<proteinExistence type="inferred from homology"/>
<feature type="chain" id="PRO_0000306979" description="Aspartate 1-decarboxylase beta chain" evidence="1">
    <location>
        <begin position="1"/>
        <end position="24"/>
    </location>
</feature>
<feature type="chain" id="PRO_0000306980" description="Aspartate 1-decarboxylase alpha chain" evidence="1">
    <location>
        <begin position="25"/>
        <end position="111"/>
    </location>
</feature>
<feature type="active site" description="Schiff-base intermediate with substrate; via pyruvic acid" evidence="1">
    <location>
        <position position="25"/>
    </location>
</feature>
<feature type="active site" description="Proton donor" evidence="1">
    <location>
        <position position="58"/>
    </location>
</feature>
<feature type="binding site" evidence="1">
    <location>
        <position position="57"/>
    </location>
    <ligand>
        <name>substrate</name>
    </ligand>
</feature>
<feature type="binding site" evidence="1">
    <location>
        <begin position="73"/>
        <end position="75"/>
    </location>
    <ligand>
        <name>substrate</name>
    </ligand>
</feature>
<feature type="modified residue" description="Pyruvic acid (Ser)" evidence="1">
    <location>
        <position position="25"/>
    </location>
</feature>
<gene>
    <name evidence="1" type="primary">panD</name>
    <name type="ordered locus">FTN_1354</name>
</gene>
<name>PAND_FRATN</name>
<reference key="1">
    <citation type="journal article" date="2007" name="Genome Biol.">
        <title>Comparison of Francisella tularensis genomes reveals evolutionary events associated with the emergence of human pathogenic strains.</title>
        <authorList>
            <person name="Rohmer L."/>
            <person name="Fong C."/>
            <person name="Abmayr S."/>
            <person name="Wasnick M."/>
            <person name="Larson Freeman T.J."/>
            <person name="Radey M."/>
            <person name="Guina T."/>
            <person name="Svensson K."/>
            <person name="Hayden H.S."/>
            <person name="Jacobs M."/>
            <person name="Gallagher L.A."/>
            <person name="Manoil C."/>
            <person name="Ernst R.K."/>
            <person name="Drees B."/>
            <person name="Buckley D."/>
            <person name="Haugen E."/>
            <person name="Bovee D."/>
            <person name="Zhou Y."/>
            <person name="Chang J."/>
            <person name="Levy R."/>
            <person name="Lim R."/>
            <person name="Gillett W."/>
            <person name="Guenthener D."/>
            <person name="Kang A."/>
            <person name="Shaffer S.A."/>
            <person name="Taylor G."/>
            <person name="Chen J."/>
            <person name="Gallis B."/>
            <person name="D'Argenio D.A."/>
            <person name="Forsman M."/>
            <person name="Olson M.V."/>
            <person name="Goodlett D.R."/>
            <person name="Kaul R."/>
            <person name="Miller S.I."/>
            <person name="Brittnacher M.J."/>
        </authorList>
    </citation>
    <scope>NUCLEOTIDE SEQUENCE [LARGE SCALE GENOMIC DNA]</scope>
    <source>
        <strain>U112</strain>
    </source>
</reference>
<organism>
    <name type="scientific">Francisella tularensis subsp. novicida (strain U112)</name>
    <dbReference type="NCBI Taxonomy" id="401614"/>
    <lineage>
        <taxon>Bacteria</taxon>
        <taxon>Pseudomonadati</taxon>
        <taxon>Pseudomonadota</taxon>
        <taxon>Gammaproteobacteria</taxon>
        <taxon>Thiotrichales</taxon>
        <taxon>Francisellaceae</taxon>
        <taxon>Francisella</taxon>
    </lineage>
</organism>
<dbReference type="EC" id="4.1.1.11" evidence="1"/>
<dbReference type="EMBL" id="CP000439">
    <property type="protein sequence ID" value="ABK90229.1"/>
    <property type="molecule type" value="Genomic_DNA"/>
</dbReference>
<dbReference type="RefSeq" id="WP_003034575.1">
    <property type="nucleotide sequence ID" value="NC_008601.1"/>
</dbReference>
<dbReference type="SMR" id="A0Q7L4"/>
<dbReference type="KEGG" id="ftn:FTN_1354"/>
<dbReference type="KEGG" id="ftx:AW25_649"/>
<dbReference type="BioCyc" id="FTUL401614:G1G75-1399-MONOMER"/>
<dbReference type="UniPathway" id="UPA00028">
    <property type="reaction ID" value="UER00002"/>
</dbReference>
<dbReference type="Proteomes" id="UP000000762">
    <property type="component" value="Chromosome"/>
</dbReference>
<dbReference type="GO" id="GO:0005829">
    <property type="term" value="C:cytosol"/>
    <property type="evidence" value="ECO:0007669"/>
    <property type="project" value="TreeGrafter"/>
</dbReference>
<dbReference type="GO" id="GO:0004068">
    <property type="term" value="F:aspartate 1-decarboxylase activity"/>
    <property type="evidence" value="ECO:0007669"/>
    <property type="project" value="UniProtKB-UniRule"/>
</dbReference>
<dbReference type="GO" id="GO:0006523">
    <property type="term" value="P:alanine biosynthetic process"/>
    <property type="evidence" value="ECO:0007669"/>
    <property type="project" value="InterPro"/>
</dbReference>
<dbReference type="GO" id="GO:0015940">
    <property type="term" value="P:pantothenate biosynthetic process"/>
    <property type="evidence" value="ECO:0007669"/>
    <property type="project" value="UniProtKB-UniRule"/>
</dbReference>
<dbReference type="CDD" id="cd06919">
    <property type="entry name" value="Asp_decarbox"/>
    <property type="match status" value="1"/>
</dbReference>
<dbReference type="Gene3D" id="2.40.40.20">
    <property type="match status" value="1"/>
</dbReference>
<dbReference type="HAMAP" id="MF_00446">
    <property type="entry name" value="PanD"/>
    <property type="match status" value="1"/>
</dbReference>
<dbReference type="InterPro" id="IPR009010">
    <property type="entry name" value="Asp_de-COase-like_dom_sf"/>
</dbReference>
<dbReference type="InterPro" id="IPR003190">
    <property type="entry name" value="Asp_decarbox"/>
</dbReference>
<dbReference type="NCBIfam" id="TIGR00223">
    <property type="entry name" value="panD"/>
    <property type="match status" value="1"/>
</dbReference>
<dbReference type="PANTHER" id="PTHR21012">
    <property type="entry name" value="ASPARTATE 1-DECARBOXYLASE"/>
    <property type="match status" value="1"/>
</dbReference>
<dbReference type="PANTHER" id="PTHR21012:SF0">
    <property type="entry name" value="ASPARTATE 1-DECARBOXYLASE"/>
    <property type="match status" value="1"/>
</dbReference>
<dbReference type="Pfam" id="PF02261">
    <property type="entry name" value="Asp_decarbox"/>
    <property type="match status" value="1"/>
</dbReference>
<dbReference type="PIRSF" id="PIRSF006246">
    <property type="entry name" value="Asp_decarbox"/>
    <property type="match status" value="1"/>
</dbReference>
<dbReference type="SUPFAM" id="SSF50692">
    <property type="entry name" value="ADC-like"/>
    <property type="match status" value="1"/>
</dbReference>
<evidence type="ECO:0000255" key="1">
    <source>
        <dbReference type="HAMAP-Rule" id="MF_00446"/>
    </source>
</evidence>
<comment type="function">
    <text evidence="1">Catalyzes the pyruvoyl-dependent decarboxylation of aspartate to produce beta-alanine.</text>
</comment>
<comment type="catalytic activity">
    <reaction evidence="1">
        <text>L-aspartate + H(+) = beta-alanine + CO2</text>
        <dbReference type="Rhea" id="RHEA:19497"/>
        <dbReference type="ChEBI" id="CHEBI:15378"/>
        <dbReference type="ChEBI" id="CHEBI:16526"/>
        <dbReference type="ChEBI" id="CHEBI:29991"/>
        <dbReference type="ChEBI" id="CHEBI:57966"/>
        <dbReference type="EC" id="4.1.1.11"/>
    </reaction>
</comment>
<comment type="cofactor">
    <cofactor evidence="1">
        <name>pyruvate</name>
        <dbReference type="ChEBI" id="CHEBI:15361"/>
    </cofactor>
    <text evidence="1">Binds 1 pyruvoyl group covalently per subunit.</text>
</comment>
<comment type="pathway">
    <text evidence="1">Cofactor biosynthesis; (R)-pantothenate biosynthesis; beta-alanine from L-aspartate: step 1/1.</text>
</comment>
<comment type="subunit">
    <text evidence="1">Heterooctamer of four alpha and four beta subunits.</text>
</comment>
<comment type="subcellular location">
    <subcellularLocation>
        <location evidence="1">Cytoplasm</location>
    </subcellularLocation>
</comment>
<comment type="PTM">
    <text evidence="1">Is synthesized initially as an inactive proenzyme, which is activated by self-cleavage at a specific serine bond to produce a beta-subunit with a hydroxyl group at its C-terminus and an alpha-subunit with a pyruvoyl group at its N-terminus.</text>
</comment>
<comment type="similarity">
    <text evidence="1">Belongs to the PanD family.</text>
</comment>